<organism>
    <name type="scientific">Yersinia pseudotuberculosis serotype IB (strain PB1/+)</name>
    <dbReference type="NCBI Taxonomy" id="502801"/>
    <lineage>
        <taxon>Bacteria</taxon>
        <taxon>Pseudomonadati</taxon>
        <taxon>Pseudomonadota</taxon>
        <taxon>Gammaproteobacteria</taxon>
        <taxon>Enterobacterales</taxon>
        <taxon>Yersiniaceae</taxon>
        <taxon>Yersinia</taxon>
    </lineage>
</organism>
<feature type="chain" id="PRO_1000191110" description="Multidrug resistance protein MdtK">
    <location>
        <begin position="1"/>
        <end position="457"/>
    </location>
</feature>
<feature type="transmembrane region" description="Helical" evidence="1">
    <location>
        <begin position="11"/>
        <end position="31"/>
    </location>
</feature>
<feature type="transmembrane region" description="Helical" evidence="1">
    <location>
        <begin position="46"/>
        <end position="66"/>
    </location>
</feature>
<feature type="transmembrane region" description="Helical" evidence="1">
    <location>
        <begin position="93"/>
        <end position="113"/>
    </location>
</feature>
<feature type="transmembrane region" description="Helical" evidence="1">
    <location>
        <begin position="127"/>
        <end position="147"/>
    </location>
</feature>
<feature type="transmembrane region" description="Helical" evidence="1">
    <location>
        <begin position="160"/>
        <end position="180"/>
    </location>
</feature>
<feature type="transmembrane region" description="Helical" evidence="1">
    <location>
        <begin position="188"/>
        <end position="208"/>
    </location>
</feature>
<feature type="transmembrane region" description="Helical" evidence="1">
    <location>
        <begin position="243"/>
        <end position="263"/>
    </location>
</feature>
<feature type="transmembrane region" description="Helical" evidence="1">
    <location>
        <begin position="283"/>
        <end position="301"/>
    </location>
</feature>
<feature type="transmembrane region" description="Helical" evidence="1">
    <location>
        <begin position="316"/>
        <end position="336"/>
    </location>
</feature>
<feature type="transmembrane region" description="Helical" evidence="1">
    <location>
        <begin position="357"/>
        <end position="377"/>
    </location>
</feature>
<feature type="transmembrane region" description="Helical" evidence="1">
    <location>
        <begin position="387"/>
        <end position="407"/>
    </location>
</feature>
<feature type="transmembrane region" description="Helical" evidence="1">
    <location>
        <begin position="418"/>
        <end position="438"/>
    </location>
</feature>
<comment type="function">
    <text evidence="1">Multidrug efflux pump that functions probably as a Na(+)/drug antiporter.</text>
</comment>
<comment type="subcellular location">
    <subcellularLocation>
        <location evidence="1">Cell inner membrane</location>
        <topology evidence="1">Multi-pass membrane protein</topology>
    </subcellularLocation>
</comment>
<comment type="similarity">
    <text evidence="1">Belongs to the multi antimicrobial extrusion (MATE) (TC 2.A.66.1) family. MdtK subfamily.</text>
</comment>
<dbReference type="EMBL" id="CP001048">
    <property type="protein sequence ID" value="ACC89340.1"/>
    <property type="molecule type" value="Genomic_DNA"/>
</dbReference>
<dbReference type="RefSeq" id="WP_002210937.1">
    <property type="nucleotide sequence ID" value="NZ_CP009780.1"/>
</dbReference>
<dbReference type="SMR" id="B2K5I9"/>
<dbReference type="KEGG" id="ypb:YPTS_2379"/>
<dbReference type="PATRIC" id="fig|502801.10.peg.1784"/>
<dbReference type="GO" id="GO:0005886">
    <property type="term" value="C:plasma membrane"/>
    <property type="evidence" value="ECO:0007669"/>
    <property type="project" value="UniProtKB-SubCell"/>
</dbReference>
<dbReference type="GO" id="GO:0015297">
    <property type="term" value="F:antiporter activity"/>
    <property type="evidence" value="ECO:0007669"/>
    <property type="project" value="UniProtKB-UniRule"/>
</dbReference>
<dbReference type="GO" id="GO:0042910">
    <property type="term" value="F:xenobiotic transmembrane transporter activity"/>
    <property type="evidence" value="ECO:0007669"/>
    <property type="project" value="UniProtKB-UniRule"/>
</dbReference>
<dbReference type="GO" id="GO:0006814">
    <property type="term" value="P:sodium ion transport"/>
    <property type="evidence" value="ECO:0007669"/>
    <property type="project" value="UniProtKB-UniRule"/>
</dbReference>
<dbReference type="GO" id="GO:0006855">
    <property type="term" value="P:xenobiotic transmembrane transport"/>
    <property type="evidence" value="ECO:0007669"/>
    <property type="project" value="UniProtKB-UniRule"/>
</dbReference>
<dbReference type="CDD" id="cd13131">
    <property type="entry name" value="MATE_NorM_like"/>
    <property type="match status" value="1"/>
</dbReference>
<dbReference type="HAMAP" id="MF_00400">
    <property type="entry name" value="MdtK"/>
    <property type="match status" value="1"/>
</dbReference>
<dbReference type="InterPro" id="IPR002528">
    <property type="entry name" value="MATE_fam"/>
</dbReference>
<dbReference type="InterPro" id="IPR050222">
    <property type="entry name" value="MATE_MdtK"/>
</dbReference>
<dbReference type="InterPro" id="IPR048279">
    <property type="entry name" value="MdtK-like"/>
</dbReference>
<dbReference type="InterPro" id="IPR022913">
    <property type="entry name" value="Multidrug-R_MdtK"/>
</dbReference>
<dbReference type="NCBIfam" id="TIGR00797">
    <property type="entry name" value="matE"/>
    <property type="match status" value="1"/>
</dbReference>
<dbReference type="PANTHER" id="PTHR43298:SF2">
    <property type="entry name" value="FMN_FAD EXPORTER YEEO-RELATED"/>
    <property type="match status" value="1"/>
</dbReference>
<dbReference type="PANTHER" id="PTHR43298">
    <property type="entry name" value="MULTIDRUG RESISTANCE PROTEIN NORM-RELATED"/>
    <property type="match status" value="1"/>
</dbReference>
<dbReference type="Pfam" id="PF01554">
    <property type="entry name" value="MatE"/>
    <property type="match status" value="2"/>
</dbReference>
<dbReference type="PIRSF" id="PIRSF006603">
    <property type="entry name" value="DinF"/>
    <property type="match status" value="1"/>
</dbReference>
<protein>
    <recommendedName>
        <fullName evidence="1">Multidrug resistance protein MdtK</fullName>
    </recommendedName>
    <alternativeName>
        <fullName evidence="1">Multidrug-efflux transporter</fullName>
    </alternativeName>
</protein>
<accession>B2K5I9</accession>
<evidence type="ECO:0000255" key="1">
    <source>
        <dbReference type="HAMAP-Rule" id="MF_00400"/>
    </source>
</evidence>
<keyword id="KW-0050">Antiport</keyword>
<keyword id="KW-0997">Cell inner membrane</keyword>
<keyword id="KW-1003">Cell membrane</keyword>
<keyword id="KW-0406">Ion transport</keyword>
<keyword id="KW-0472">Membrane</keyword>
<keyword id="KW-0915">Sodium</keyword>
<keyword id="KW-0739">Sodium transport</keyword>
<keyword id="KW-0812">Transmembrane</keyword>
<keyword id="KW-1133">Transmembrane helix</keyword>
<keyword id="KW-0813">Transport</keyword>
<name>MDTK_YERPB</name>
<reference key="1">
    <citation type="submission" date="2008-04" db="EMBL/GenBank/DDBJ databases">
        <title>Complete sequence of Yersinia pseudotuberculosis PB1/+.</title>
        <authorList>
            <person name="Copeland A."/>
            <person name="Lucas S."/>
            <person name="Lapidus A."/>
            <person name="Glavina del Rio T."/>
            <person name="Dalin E."/>
            <person name="Tice H."/>
            <person name="Bruce D."/>
            <person name="Goodwin L."/>
            <person name="Pitluck S."/>
            <person name="Munk A.C."/>
            <person name="Brettin T."/>
            <person name="Detter J.C."/>
            <person name="Han C."/>
            <person name="Tapia R."/>
            <person name="Schmutz J."/>
            <person name="Larimer F."/>
            <person name="Land M."/>
            <person name="Hauser L."/>
            <person name="Challacombe J.F."/>
            <person name="Green L."/>
            <person name="Lindler L.E."/>
            <person name="Nikolich M.P."/>
            <person name="Richardson P."/>
        </authorList>
    </citation>
    <scope>NUCLEOTIDE SEQUENCE [LARGE SCALE GENOMIC DNA]</scope>
    <source>
        <strain>PB1/+</strain>
    </source>
</reference>
<gene>
    <name evidence="1" type="primary">mdtK</name>
    <name type="ordered locus">YPTS_2379</name>
</gene>
<proteinExistence type="inferred from homology"/>
<sequence>MQKYIVEARSLLALAIPVVIAQLSQTAMGVVDTIMAGSVSATDMAAVAVGTSIWLPAILFGHGLLLALTPTVAQLNGSGRRSQIAHQVRQGFWLALCVSVLIMLVLYNSDHVIKQMDNIDPVLAQKAVGFLHAIMWGVPGYLFFQVLRNQCEGLSKTKPGMVIGFVGLLVNIPINYIFIYGKFGAPALGGVGCGVATASVYWVMFLMMRWYVTRARSQQDIKLEKGFAAPDWQVMKRLSGLGLPVALALFFEVTLFAVVALLVSPLGIVAVAGHQIALNFSSLMFMLPMSLSVAATIRVGFRLGQGAVEQAQVAAYTSMAVGLLLASVTAVFTIVFREHIALLYNKTPEVVTMASHLMLLAALYQLSDAVQVIGSGVLRGYKDTRSIFFITFTAYWLLGLPSGYLLGLTDYILPAMGPAGFWIGFIIGLTAAAILMVLRIRWLQKQPTAFILQRAAH</sequence>